<keyword id="KW-0002">3D-structure</keyword>
<keyword id="KW-0007">Acetylation</keyword>
<keyword id="KW-1003">Cell membrane</keyword>
<keyword id="KW-0903">Direct protein sequencing</keyword>
<keyword id="KW-0967">Endosome</keyword>
<keyword id="KW-0342">GTP-binding</keyword>
<keyword id="KW-0378">Hydrolase</keyword>
<keyword id="KW-0449">Lipoprotein</keyword>
<keyword id="KW-0472">Membrane</keyword>
<keyword id="KW-0488">Methylation</keyword>
<keyword id="KW-0547">Nucleotide-binding</keyword>
<keyword id="KW-0576">Peroxisome</keyword>
<keyword id="KW-0636">Prenylation</keyword>
<keyword id="KW-1185">Reference proteome</keyword>
<comment type="function">
    <text evidence="5 6 10 11 13 14 15 16 18 19 20 21 22 26 27">Acts as a central regulator in the cell wall integrity signaling pathway, which is regulated by the cell cycle and in response to various types of cell wall stress. Integrates signals from different cell surface sensors, and activates a set of effectors, regulating processes including beta-glucan synthesis at the site of wall remodeling, gene expression related to cell wall biogenesis, organization of the actin cytoskeleton, and protein- and secretory vesicle-targeting to the growth site. Activates the protein kinase C (PKC1) MAP kinase cascade, the beta-1,3-glucan synthase (FKS1), the formin BNI1, the exocyst component SEC3 and the transcription factor SKN7.</text>
</comment>
<comment type="catalytic activity">
    <reaction evidence="2">
        <text>GTP + H2O = GDP + phosphate + H(+)</text>
        <dbReference type="Rhea" id="RHEA:19669"/>
        <dbReference type="ChEBI" id="CHEBI:15377"/>
        <dbReference type="ChEBI" id="CHEBI:15378"/>
        <dbReference type="ChEBI" id="CHEBI:37565"/>
        <dbReference type="ChEBI" id="CHEBI:43474"/>
        <dbReference type="ChEBI" id="CHEBI:58189"/>
        <dbReference type="EC" id="3.6.5.2"/>
    </reaction>
    <physiologicalReaction direction="left-to-right" evidence="2">
        <dbReference type="Rhea" id="RHEA:19670"/>
    </physiologicalReaction>
</comment>
<comment type="activity regulation">
    <text evidence="6 8 9 15 18 23 28 29">Alternates between an inactive form bound to GDP and an active form bound to GTP. Activated by the guanine nucleotide-exchange factors (GEFs) ROM1, ROM2 and TUS1, and inactivated by GTPase-activating proteins (GAPs) BAG7, BEM2, LRG1, and SAC7, and the Rho GDP-dissociation inhibitor RDI1. The different GAPs regulate RHO1 in a target-specific manner.</text>
</comment>
<comment type="subunit">
    <text evidence="5 6 8 9 10 12 21 22 24 25 26 27 28 29 30">Interacts with BEM4; the interaction is direct (PubMed:8754839, PubMed:8754840). Interacts with SEC3; the interaction is direct (PubMed:11283608). Interacts with the GAP BAG7 (PubMed:11591390, PubMed:12207708). Interacts with the GAP LRG1 (PubMed:11447600). Interacts with the GAP SAC7 (PubMed:11447600, PubMed:9038344). Interacts with the GAP RDI1 (PubMed:9242378). Interacts with the 1,3-beta-glucan synthase component FKS1 (PubMed:8602515). Interacts with the protein kinase PKC1 (PubMed:8621575, PubMed:8846785). Interacts with the G protein beta subunit STE4 (PubMed:12660244). Interacts with SKN7 (PubMed:9535835). Interacts with TUS1 (PubMed:11839800). Interacts with BNI1 (PubMed:8947028).</text>
</comment>
<comment type="interaction">
    <interactant intactId="EBI-15121">
        <id>P06780</id>
    </interactant>
    <interactant intactId="EBI-29423">
        <id>Q99299</id>
        <label>AIM44</label>
    </interactant>
    <organismsDiffer>false</organismsDiffer>
    <experiments>3</experiments>
</comment>
<comment type="interaction">
    <interactant intactId="EBI-15121">
        <id>P06780</id>
    </interactant>
    <interactant intactId="EBI-7708">
        <id>P38631</id>
        <label>FKS1</label>
    </interactant>
    <organismsDiffer>false</organismsDiffer>
    <experiments>3</experiments>
</comment>
<comment type="interaction">
    <interactant intactId="EBI-15121">
        <id>P06780</id>
    </interactant>
    <interactant intactId="EBI-7525">
        <id>Q12434</id>
        <label>RDI1</label>
    </interactant>
    <organismsDiffer>false</organismsDiffer>
    <experiments>2</experiments>
</comment>
<comment type="interaction">
    <interactant intactId="EBI-15121">
        <id>P06780</id>
    </interactant>
    <interactant intactId="EBI-16850">
        <id>P33332</id>
        <label>SEC3</label>
    </interactant>
    <organismsDiffer>false</organismsDiffer>
    <experiments>2</experiments>
</comment>
<comment type="subcellular location">
    <subcellularLocation>
        <location>Cell membrane</location>
        <topology>Lipid-anchor</topology>
    </subcellularLocation>
    <subcellularLocation>
        <location>Endosome membrane</location>
        <topology>Lipid-anchor</topology>
    </subcellularLocation>
    <subcellularLocation>
        <location>Peroxisome membrane</location>
        <topology>Lipid-anchor</topology>
    </subcellularLocation>
    <text>Plasma membrane-associated at sites of polarized growth such as incipient bud sites, bud tips, the bud neck during cytokinesis, and the neck and tip of mating projections. Also found on internal membranes of endosomes and peroxisomes.</text>
</comment>
<comment type="similarity">
    <text evidence="32">Belongs to the small GTPase superfamily. Rho family.</text>
</comment>
<organism>
    <name type="scientific">Saccharomyces cerevisiae (strain ATCC 204508 / S288c)</name>
    <name type="common">Baker's yeast</name>
    <dbReference type="NCBI Taxonomy" id="559292"/>
    <lineage>
        <taxon>Eukaryota</taxon>
        <taxon>Fungi</taxon>
        <taxon>Dikarya</taxon>
        <taxon>Ascomycota</taxon>
        <taxon>Saccharomycotina</taxon>
        <taxon>Saccharomycetes</taxon>
        <taxon>Saccharomycetales</taxon>
        <taxon>Saccharomycetaceae</taxon>
        <taxon>Saccharomyces</taxon>
    </lineage>
</organism>
<protein>
    <recommendedName>
        <fullName>GTP-binding protein RHO1</fullName>
        <ecNumber evidence="2">3.6.5.2</ecNumber>
    </recommendedName>
    <alternativeName>
        <fullName>Rho-type GTPase 1</fullName>
    </alternativeName>
</protein>
<dbReference type="EC" id="3.6.5.2" evidence="2"/>
<dbReference type="EMBL" id="M15189">
    <property type="protein sequence ID" value="AAA34977.1"/>
    <property type="molecule type" value="Genomic_DNA"/>
</dbReference>
<dbReference type="EMBL" id="U25840">
    <property type="protein sequence ID" value="AAB68152.1"/>
    <property type="molecule type" value="Genomic_DNA"/>
</dbReference>
<dbReference type="EMBL" id="M15161">
    <property type="protein sequence ID" value="AAA74729.1"/>
    <property type="molecule type" value="Genomic_DNA"/>
</dbReference>
<dbReference type="EMBL" id="AY558062">
    <property type="protein sequence ID" value="AAS56388.1"/>
    <property type="molecule type" value="Genomic_DNA"/>
</dbReference>
<dbReference type="EMBL" id="BK006949">
    <property type="protein sequence ID" value="DAA11582.1"/>
    <property type="molecule type" value="Genomic_DNA"/>
</dbReference>
<dbReference type="PIR" id="A26587">
    <property type="entry name" value="TVBYH1"/>
</dbReference>
<dbReference type="RefSeq" id="NP_015491.1">
    <property type="nucleotide sequence ID" value="NM_001184262.1"/>
</dbReference>
<dbReference type="PDB" id="3A58">
    <property type="method" value="X-ray"/>
    <property type="resolution" value="2.60 A"/>
    <property type="chains" value="B/D/F=1-188"/>
</dbReference>
<dbReference type="PDB" id="8WLA">
    <property type="method" value="EM"/>
    <property type="resolution" value="3.40 A"/>
    <property type="chains" value="A=1-209"/>
</dbReference>
<dbReference type="PDBsum" id="3A58"/>
<dbReference type="PDBsum" id="8WLA"/>
<dbReference type="EMDB" id="EMD-37614"/>
<dbReference type="SMR" id="P06780"/>
<dbReference type="BioGRID" id="36338">
    <property type="interactions" value="190"/>
</dbReference>
<dbReference type="ComplexPortal" id="CPX-1812">
    <property type="entry name" value="1,3-beta-D-glucan synthase complex, FKS1-RHO1 variant"/>
</dbReference>
<dbReference type="ComplexPortal" id="CPX-1813">
    <property type="entry name" value="1,3-beta-D-glucan synthase complex, FKS2-RHO1 variant"/>
</dbReference>
<dbReference type="ComplexPortal" id="CPX-3028">
    <property type="entry name" value="1,3-beta-D-glucan synthase complex, FKS3-RHO1 variant"/>
</dbReference>
<dbReference type="DIP" id="DIP-1040N"/>
<dbReference type="FunCoup" id="P06780">
    <property type="interactions" value="1003"/>
</dbReference>
<dbReference type="IntAct" id="P06780">
    <property type="interactions" value="14"/>
</dbReference>
<dbReference type="MINT" id="P06780"/>
<dbReference type="STRING" id="4932.YPR165W"/>
<dbReference type="DrugBank" id="DB12471">
    <property type="generic name" value="Ibrexafungerp"/>
</dbReference>
<dbReference type="iPTMnet" id="P06780"/>
<dbReference type="PaxDb" id="4932-YPR165W"/>
<dbReference type="PeptideAtlas" id="P06780"/>
<dbReference type="EnsemblFungi" id="YPR165W_mRNA">
    <property type="protein sequence ID" value="YPR165W"/>
    <property type="gene ID" value="YPR165W"/>
</dbReference>
<dbReference type="GeneID" id="856294"/>
<dbReference type="KEGG" id="sce:YPR165W"/>
<dbReference type="AGR" id="SGD:S000006369"/>
<dbReference type="SGD" id="S000006369">
    <property type="gene designation" value="RHO1"/>
</dbReference>
<dbReference type="VEuPathDB" id="FungiDB:YPR165W"/>
<dbReference type="eggNOG" id="KOG0393">
    <property type="taxonomic scope" value="Eukaryota"/>
</dbReference>
<dbReference type="HOGENOM" id="CLU_041217_21_2_1"/>
<dbReference type="InParanoid" id="P06780"/>
<dbReference type="OMA" id="EVNHYIP"/>
<dbReference type="OrthoDB" id="8830751at2759"/>
<dbReference type="BioCyc" id="YEAST:G3O-34294-MONOMER"/>
<dbReference type="Reactome" id="R-SCE-198203">
    <property type="pathway name" value="PI3K/AKT activation"/>
</dbReference>
<dbReference type="Reactome" id="R-SCE-392451">
    <property type="pathway name" value="G beta:gamma signalling through PI3Kgamma"/>
</dbReference>
<dbReference type="Reactome" id="R-SCE-416482">
    <property type="pathway name" value="G alpha (12/13) signalling events"/>
</dbReference>
<dbReference type="Reactome" id="R-SCE-5625740">
    <property type="pathway name" value="RHO GTPases activate PKNs"/>
</dbReference>
<dbReference type="Reactome" id="R-SCE-6798695">
    <property type="pathway name" value="Neutrophil degranulation"/>
</dbReference>
<dbReference type="Reactome" id="R-SCE-8980692">
    <property type="pathway name" value="RHOA GTPase cycle"/>
</dbReference>
<dbReference type="Reactome" id="R-SCE-9013026">
    <property type="pathway name" value="RHOB GTPase cycle"/>
</dbReference>
<dbReference type="Reactome" id="R-SCE-9013106">
    <property type="pathway name" value="RHOC GTPase cycle"/>
</dbReference>
<dbReference type="Reactome" id="R-SCE-9013405">
    <property type="pathway name" value="RHOD GTPase cycle"/>
</dbReference>
<dbReference type="Reactome" id="R-SCE-9035034">
    <property type="pathway name" value="RHOF GTPase cycle"/>
</dbReference>
<dbReference type="Reactome" id="R-SCE-9696264">
    <property type="pathway name" value="RND3 GTPase cycle"/>
</dbReference>
<dbReference type="Reactome" id="R-SCE-9696270">
    <property type="pathway name" value="RND2 GTPase cycle"/>
</dbReference>
<dbReference type="Reactome" id="R-SCE-9696273">
    <property type="pathway name" value="RND1 GTPase cycle"/>
</dbReference>
<dbReference type="BioGRID-ORCS" id="856294">
    <property type="hits" value="1 hit in 10 CRISPR screens"/>
</dbReference>
<dbReference type="CD-CODE" id="E03F929F">
    <property type="entry name" value="Stress granule"/>
</dbReference>
<dbReference type="EvolutionaryTrace" id="P06780"/>
<dbReference type="PRO" id="PR:P06780"/>
<dbReference type="Proteomes" id="UP000002311">
    <property type="component" value="Chromosome XVI"/>
</dbReference>
<dbReference type="RNAct" id="P06780">
    <property type="molecule type" value="protein"/>
</dbReference>
<dbReference type="GO" id="GO:0000148">
    <property type="term" value="C:1,3-beta-D-glucan synthase complex"/>
    <property type="evidence" value="ECO:0000314"/>
    <property type="project" value="SGD"/>
</dbReference>
<dbReference type="GO" id="GO:0071944">
    <property type="term" value="C:cell periphery"/>
    <property type="evidence" value="ECO:0007005"/>
    <property type="project" value="SGD"/>
</dbReference>
<dbReference type="GO" id="GO:0005933">
    <property type="term" value="C:cellular bud"/>
    <property type="evidence" value="ECO:0007005"/>
    <property type="project" value="SGD"/>
</dbReference>
<dbReference type="GO" id="GO:0005935">
    <property type="term" value="C:cellular bud neck"/>
    <property type="evidence" value="ECO:0000314"/>
    <property type="project" value="SGD"/>
</dbReference>
<dbReference type="GO" id="GO:0005934">
    <property type="term" value="C:cellular bud tip"/>
    <property type="evidence" value="ECO:0000314"/>
    <property type="project" value="SGD"/>
</dbReference>
<dbReference type="GO" id="GO:0005829">
    <property type="term" value="C:cytosol"/>
    <property type="evidence" value="ECO:0000318"/>
    <property type="project" value="GO_Central"/>
</dbReference>
<dbReference type="GO" id="GO:0005783">
    <property type="term" value="C:endoplasmic reticulum"/>
    <property type="evidence" value="ECO:0007005"/>
    <property type="project" value="SGD"/>
</dbReference>
<dbReference type="GO" id="GO:0010008">
    <property type="term" value="C:endosome membrane"/>
    <property type="evidence" value="ECO:0007669"/>
    <property type="project" value="UniProtKB-SubCell"/>
</dbReference>
<dbReference type="GO" id="GO:0009277">
    <property type="term" value="C:fungal-type cell wall"/>
    <property type="evidence" value="ECO:0000303"/>
    <property type="project" value="ComplexPortal"/>
</dbReference>
<dbReference type="GO" id="GO:0000329">
    <property type="term" value="C:fungal-type vacuole membrane"/>
    <property type="evidence" value="ECO:0000314"/>
    <property type="project" value="SGD"/>
</dbReference>
<dbReference type="GO" id="GO:0005794">
    <property type="term" value="C:Golgi apparatus"/>
    <property type="evidence" value="ECO:0000314"/>
    <property type="project" value="SGD"/>
</dbReference>
<dbReference type="GO" id="GO:0000131">
    <property type="term" value="C:incipient cellular bud site"/>
    <property type="evidence" value="ECO:0000314"/>
    <property type="project" value="SGD"/>
</dbReference>
<dbReference type="GO" id="GO:0043332">
    <property type="term" value="C:mating projection tip"/>
    <property type="evidence" value="ECO:0000314"/>
    <property type="project" value="SGD"/>
</dbReference>
<dbReference type="GO" id="GO:0016020">
    <property type="term" value="C:membrane"/>
    <property type="evidence" value="ECO:0000303"/>
    <property type="project" value="ComplexPortal"/>
</dbReference>
<dbReference type="GO" id="GO:0005741">
    <property type="term" value="C:mitochondrial outer membrane"/>
    <property type="evidence" value="ECO:0007005"/>
    <property type="project" value="SGD"/>
</dbReference>
<dbReference type="GO" id="GO:0005739">
    <property type="term" value="C:mitochondrion"/>
    <property type="evidence" value="ECO:0007005"/>
    <property type="project" value="SGD"/>
</dbReference>
<dbReference type="GO" id="GO:0005778">
    <property type="term" value="C:peroxisomal membrane"/>
    <property type="evidence" value="ECO:0007669"/>
    <property type="project" value="UniProtKB-SubCell"/>
</dbReference>
<dbReference type="GO" id="GO:0005777">
    <property type="term" value="C:peroxisome"/>
    <property type="evidence" value="ECO:0000314"/>
    <property type="project" value="SGD"/>
</dbReference>
<dbReference type="GO" id="GO:0005886">
    <property type="term" value="C:plasma membrane"/>
    <property type="evidence" value="ECO:0007005"/>
    <property type="project" value="SGD"/>
</dbReference>
<dbReference type="GO" id="GO:0031160">
    <property type="term" value="C:spore wall"/>
    <property type="evidence" value="ECO:0000303"/>
    <property type="project" value="ComplexPortal"/>
</dbReference>
<dbReference type="GO" id="GO:0008047">
    <property type="term" value="F:enzyme activator activity"/>
    <property type="evidence" value="ECO:0000314"/>
    <property type="project" value="SGD"/>
</dbReference>
<dbReference type="GO" id="GO:0031681">
    <property type="term" value="F:G-protein beta-subunit binding"/>
    <property type="evidence" value="ECO:0000353"/>
    <property type="project" value="SGD"/>
</dbReference>
<dbReference type="GO" id="GO:0005525">
    <property type="term" value="F:GTP binding"/>
    <property type="evidence" value="ECO:0000318"/>
    <property type="project" value="GO_Central"/>
</dbReference>
<dbReference type="GO" id="GO:0003924">
    <property type="term" value="F:GTPase activity"/>
    <property type="evidence" value="ECO:0000314"/>
    <property type="project" value="SGD"/>
</dbReference>
<dbReference type="GO" id="GO:0019901">
    <property type="term" value="F:protein kinase binding"/>
    <property type="evidence" value="ECO:0000318"/>
    <property type="project" value="GO_Central"/>
</dbReference>
<dbReference type="GO" id="GO:0006075">
    <property type="term" value="P:(1-&gt;3)-beta-D-glucan biosynthetic process"/>
    <property type="evidence" value="ECO:0000314"/>
    <property type="project" value="ComplexPortal"/>
</dbReference>
<dbReference type="GO" id="GO:0030036">
    <property type="term" value="P:actin cytoskeleton organization"/>
    <property type="evidence" value="ECO:0000315"/>
    <property type="project" value="SGD"/>
</dbReference>
<dbReference type="GO" id="GO:0007015">
    <property type="term" value="P:actin filament organization"/>
    <property type="evidence" value="ECO:0000318"/>
    <property type="project" value="GO_Central"/>
</dbReference>
<dbReference type="GO" id="GO:0030476">
    <property type="term" value="P:ascospore wall assembly"/>
    <property type="evidence" value="ECO:0000303"/>
    <property type="project" value="ComplexPortal"/>
</dbReference>
<dbReference type="GO" id="GO:0007117">
    <property type="term" value="P:budding cell bud growth"/>
    <property type="evidence" value="ECO:0000315"/>
    <property type="project" value="SGD"/>
</dbReference>
<dbReference type="GO" id="GO:0032186">
    <property type="term" value="P:cellular bud neck septin ring organization"/>
    <property type="evidence" value="ECO:0000315"/>
    <property type="project" value="SGD"/>
</dbReference>
<dbReference type="GO" id="GO:0009272">
    <property type="term" value="P:fungal-type cell wall biogenesis"/>
    <property type="evidence" value="ECO:0000303"/>
    <property type="project" value="ComplexPortal"/>
</dbReference>
<dbReference type="GO" id="GO:0045807">
    <property type="term" value="P:positive regulation of endocytosis"/>
    <property type="evidence" value="ECO:0000315"/>
    <property type="project" value="SGD"/>
</dbReference>
<dbReference type="GO" id="GO:1903501">
    <property type="term" value="P:positive regulation of mitotic actomyosin contractile ring assembly"/>
    <property type="evidence" value="ECO:0000315"/>
    <property type="project" value="SGD"/>
</dbReference>
<dbReference type="GO" id="GO:0032956">
    <property type="term" value="P:regulation of actin cytoskeleton organization"/>
    <property type="evidence" value="ECO:0000318"/>
    <property type="project" value="GO_Central"/>
</dbReference>
<dbReference type="GO" id="GO:0008361">
    <property type="term" value="P:regulation of cell size"/>
    <property type="evidence" value="ECO:0000315"/>
    <property type="project" value="SGD"/>
</dbReference>
<dbReference type="GO" id="GO:0090334">
    <property type="term" value="P:regulation of cell wall (1-&gt;3)-beta-D-glucan biosynthetic process"/>
    <property type="evidence" value="ECO:0000314"/>
    <property type="project" value="SGD"/>
</dbReference>
<dbReference type="GO" id="GO:0060178">
    <property type="term" value="P:regulation of exocyst localization"/>
    <property type="evidence" value="ECO:0000315"/>
    <property type="project" value="SGD"/>
</dbReference>
<dbReference type="GO" id="GO:0060237">
    <property type="term" value="P:regulation of fungal-type cell wall organization"/>
    <property type="evidence" value="ECO:0000315"/>
    <property type="project" value="SGD"/>
</dbReference>
<dbReference type="GO" id="GO:0032880">
    <property type="term" value="P:regulation of protein localization"/>
    <property type="evidence" value="ECO:0000315"/>
    <property type="project" value="SGD"/>
</dbReference>
<dbReference type="GO" id="GO:1903395">
    <property type="term" value="P:regulation of secondary cell septum biogenesis"/>
    <property type="evidence" value="ECO:0000315"/>
    <property type="project" value="SGD"/>
</dbReference>
<dbReference type="GO" id="GO:0032889">
    <property type="term" value="P:regulation of vacuole fusion, non-autophagic"/>
    <property type="evidence" value="ECO:0000315"/>
    <property type="project" value="SGD"/>
</dbReference>
<dbReference type="GO" id="GO:0007165">
    <property type="term" value="P:signal transduction"/>
    <property type="evidence" value="ECO:0000318"/>
    <property type="project" value="GO_Central"/>
</dbReference>
<dbReference type="GO" id="GO:0007264">
    <property type="term" value="P:small GTPase-mediated signal transduction"/>
    <property type="evidence" value="ECO:0000314"/>
    <property type="project" value="SGD"/>
</dbReference>
<dbReference type="CDD" id="cd01870">
    <property type="entry name" value="RhoA_like"/>
    <property type="match status" value="1"/>
</dbReference>
<dbReference type="FunFam" id="3.40.50.300:FF:000329">
    <property type="entry name" value="GTP-binding protein rhoA"/>
    <property type="match status" value="1"/>
</dbReference>
<dbReference type="Gene3D" id="3.40.50.300">
    <property type="entry name" value="P-loop containing nucleotide triphosphate hydrolases"/>
    <property type="match status" value="1"/>
</dbReference>
<dbReference type="InterPro" id="IPR027417">
    <property type="entry name" value="P-loop_NTPase"/>
</dbReference>
<dbReference type="InterPro" id="IPR005225">
    <property type="entry name" value="Small_GTP-bd"/>
</dbReference>
<dbReference type="InterPro" id="IPR001806">
    <property type="entry name" value="Small_GTPase"/>
</dbReference>
<dbReference type="InterPro" id="IPR003578">
    <property type="entry name" value="Small_GTPase_Rho"/>
</dbReference>
<dbReference type="NCBIfam" id="TIGR00231">
    <property type="entry name" value="small_GTP"/>
    <property type="match status" value="1"/>
</dbReference>
<dbReference type="PANTHER" id="PTHR24072">
    <property type="entry name" value="RHO FAMILY GTPASE"/>
    <property type="match status" value="1"/>
</dbReference>
<dbReference type="Pfam" id="PF00071">
    <property type="entry name" value="Ras"/>
    <property type="match status" value="1"/>
</dbReference>
<dbReference type="PRINTS" id="PR00449">
    <property type="entry name" value="RASTRNSFRMNG"/>
</dbReference>
<dbReference type="SMART" id="SM00175">
    <property type="entry name" value="RAB"/>
    <property type="match status" value="1"/>
</dbReference>
<dbReference type="SMART" id="SM00173">
    <property type="entry name" value="RAS"/>
    <property type="match status" value="1"/>
</dbReference>
<dbReference type="SMART" id="SM00174">
    <property type="entry name" value="RHO"/>
    <property type="match status" value="1"/>
</dbReference>
<dbReference type="SUPFAM" id="SSF52540">
    <property type="entry name" value="P-loop containing nucleoside triphosphate hydrolases"/>
    <property type="match status" value="1"/>
</dbReference>
<dbReference type="PROSITE" id="PS51420">
    <property type="entry name" value="RHO"/>
    <property type="match status" value="1"/>
</dbReference>
<accession>P06780</accession>
<accession>D6W4G6</accession>
<evidence type="ECO:0000250" key="1"/>
<evidence type="ECO:0000250" key="2">
    <source>
        <dbReference type="UniProtKB" id="P61586"/>
    </source>
</evidence>
<evidence type="ECO:0000250" key="3">
    <source>
        <dbReference type="UniProtKB" id="P62745"/>
    </source>
</evidence>
<evidence type="ECO:0000256" key="4">
    <source>
        <dbReference type="SAM" id="MobiDB-lite"/>
    </source>
</evidence>
<evidence type="ECO:0000269" key="5">
    <source>
    </source>
</evidence>
<evidence type="ECO:0000269" key="6">
    <source>
    </source>
</evidence>
<evidence type="ECO:0000269" key="7">
    <source>
    </source>
</evidence>
<evidence type="ECO:0000269" key="8">
    <source>
    </source>
</evidence>
<evidence type="ECO:0000269" key="9">
    <source>
    </source>
</evidence>
<evidence type="ECO:0000269" key="10">
    <source>
    </source>
</evidence>
<evidence type="ECO:0000269" key="11">
    <source>
    </source>
</evidence>
<evidence type="ECO:0000269" key="12">
    <source>
    </source>
</evidence>
<evidence type="ECO:0000269" key="13">
    <source>
    </source>
</evidence>
<evidence type="ECO:0000269" key="14">
    <source>
    </source>
</evidence>
<evidence type="ECO:0000269" key="15">
    <source>
    </source>
</evidence>
<evidence type="ECO:0000269" key="16">
    <source>
    </source>
</evidence>
<evidence type="ECO:0000269" key="17">
    <source>
    </source>
</evidence>
<evidence type="ECO:0000269" key="18">
    <source>
    </source>
</evidence>
<evidence type="ECO:0000269" key="19">
    <source>
    </source>
</evidence>
<evidence type="ECO:0000269" key="20">
    <source>
    </source>
</evidence>
<evidence type="ECO:0000269" key="21">
    <source>
    </source>
</evidence>
<evidence type="ECO:0000269" key="22">
    <source>
    </source>
</evidence>
<evidence type="ECO:0000269" key="23">
    <source>
    </source>
</evidence>
<evidence type="ECO:0000269" key="24">
    <source>
    </source>
</evidence>
<evidence type="ECO:0000269" key="25">
    <source>
    </source>
</evidence>
<evidence type="ECO:0000269" key="26">
    <source>
    </source>
</evidence>
<evidence type="ECO:0000269" key="27">
    <source>
    </source>
</evidence>
<evidence type="ECO:0000269" key="28">
    <source>
    </source>
</evidence>
<evidence type="ECO:0000269" key="29">
    <source>
    </source>
</evidence>
<evidence type="ECO:0000269" key="30">
    <source>
    </source>
</evidence>
<evidence type="ECO:0000269" key="31">
    <source ref="5"/>
</evidence>
<evidence type="ECO:0000305" key="32"/>
<evidence type="ECO:0007744" key="33">
    <source>
    </source>
</evidence>
<evidence type="ECO:0007829" key="34">
    <source>
        <dbReference type="PDB" id="3A58"/>
    </source>
</evidence>
<gene>
    <name type="primary">RHO1</name>
    <name type="ordered locus">YPR165W</name>
    <name type="ORF">P9325.3</name>
</gene>
<reference key="1">
    <citation type="journal article" date="1987" name="Proc. Natl. Acad. Sci. U.S.A.">
        <title>Characterization of two members of the rho gene family from the yeast Saccharomyces cerevisiae.</title>
        <authorList>
            <person name="Madaule P."/>
            <person name="Axel R."/>
            <person name="Myers A.M."/>
        </authorList>
    </citation>
    <scope>NUCLEOTIDE SEQUENCE [GENOMIC DNA]</scope>
    <scope>MUTAGENESIS OF GLN-68</scope>
</reference>
<reference key="2">
    <citation type="journal article" date="1997" name="Nature">
        <title>The nucleotide sequence of Saccharomyces cerevisiae chromosome XVI.</title>
        <authorList>
            <person name="Bussey H."/>
            <person name="Storms R.K."/>
            <person name="Ahmed A."/>
            <person name="Albermann K."/>
            <person name="Allen E."/>
            <person name="Ansorge W."/>
            <person name="Araujo R."/>
            <person name="Aparicio A."/>
            <person name="Barrell B.G."/>
            <person name="Badcock K."/>
            <person name="Benes V."/>
            <person name="Botstein D."/>
            <person name="Bowman S."/>
            <person name="Brueckner M."/>
            <person name="Carpenter J."/>
            <person name="Cherry J.M."/>
            <person name="Chung E."/>
            <person name="Churcher C.M."/>
            <person name="Coster F."/>
            <person name="Davis K."/>
            <person name="Davis R.W."/>
            <person name="Dietrich F.S."/>
            <person name="Delius H."/>
            <person name="DiPaolo T."/>
            <person name="Dubois E."/>
            <person name="Duesterhoeft A."/>
            <person name="Duncan M."/>
            <person name="Floeth M."/>
            <person name="Fortin N."/>
            <person name="Friesen J.D."/>
            <person name="Fritz C."/>
            <person name="Goffeau A."/>
            <person name="Hall J."/>
            <person name="Hebling U."/>
            <person name="Heumann K."/>
            <person name="Hilbert H."/>
            <person name="Hillier L.W."/>
            <person name="Hunicke-Smith S."/>
            <person name="Hyman R.W."/>
            <person name="Johnston M."/>
            <person name="Kalman S."/>
            <person name="Kleine K."/>
            <person name="Komp C."/>
            <person name="Kurdi O."/>
            <person name="Lashkari D."/>
            <person name="Lew H."/>
            <person name="Lin A."/>
            <person name="Lin D."/>
            <person name="Louis E.J."/>
            <person name="Marathe R."/>
            <person name="Messenguy F."/>
            <person name="Mewes H.-W."/>
            <person name="Mirtipati S."/>
            <person name="Moestl D."/>
            <person name="Mueller-Auer S."/>
            <person name="Namath A."/>
            <person name="Nentwich U."/>
            <person name="Oefner P."/>
            <person name="Pearson D."/>
            <person name="Petel F.X."/>
            <person name="Pohl T.M."/>
            <person name="Purnelle B."/>
            <person name="Rajandream M.A."/>
            <person name="Rechmann S."/>
            <person name="Rieger M."/>
            <person name="Riles L."/>
            <person name="Roberts D."/>
            <person name="Schaefer M."/>
            <person name="Scharfe M."/>
            <person name="Scherens B."/>
            <person name="Schramm S."/>
            <person name="Schroeder M."/>
            <person name="Sdicu A.-M."/>
            <person name="Tettelin H."/>
            <person name="Urrestarazu L.A."/>
            <person name="Ushinsky S."/>
            <person name="Vierendeels F."/>
            <person name="Vissers S."/>
            <person name="Voss H."/>
            <person name="Walsh S.V."/>
            <person name="Wambutt R."/>
            <person name="Wang Y."/>
            <person name="Wedler E."/>
            <person name="Wedler H."/>
            <person name="Winnett E."/>
            <person name="Zhong W.-W."/>
            <person name="Zollner A."/>
            <person name="Vo D.H."/>
            <person name="Hani J."/>
        </authorList>
    </citation>
    <scope>NUCLEOTIDE SEQUENCE [LARGE SCALE GENOMIC DNA]</scope>
    <source>
        <strain>ATCC 204508 / S288c</strain>
    </source>
</reference>
<reference key="3">
    <citation type="journal article" date="2014" name="G3 (Bethesda)">
        <title>The reference genome sequence of Saccharomyces cerevisiae: Then and now.</title>
        <authorList>
            <person name="Engel S.R."/>
            <person name="Dietrich F.S."/>
            <person name="Fisk D.G."/>
            <person name="Binkley G."/>
            <person name="Balakrishnan R."/>
            <person name="Costanzo M.C."/>
            <person name="Dwight S.S."/>
            <person name="Hitz B.C."/>
            <person name="Karra K."/>
            <person name="Nash R.S."/>
            <person name="Weng S."/>
            <person name="Wong E.D."/>
            <person name="Lloyd P."/>
            <person name="Skrzypek M.S."/>
            <person name="Miyasato S.R."/>
            <person name="Simison M."/>
            <person name="Cherry J.M."/>
        </authorList>
    </citation>
    <scope>GENOME REANNOTATION</scope>
    <source>
        <strain>ATCC 204508 / S288c</strain>
    </source>
</reference>
<reference key="4">
    <citation type="journal article" date="2007" name="Genome Res.">
        <title>Approaching a complete repository of sequence-verified protein-encoding clones for Saccharomyces cerevisiae.</title>
        <authorList>
            <person name="Hu Y."/>
            <person name="Rolfs A."/>
            <person name="Bhullar B."/>
            <person name="Murthy T.V.S."/>
            <person name="Zhu C."/>
            <person name="Berger M.F."/>
            <person name="Camargo A.A."/>
            <person name="Kelley F."/>
            <person name="McCarron S."/>
            <person name="Jepson D."/>
            <person name="Richardson A."/>
            <person name="Raphael J."/>
            <person name="Moreira D."/>
            <person name="Taycher E."/>
            <person name="Zuo D."/>
            <person name="Mohr S."/>
            <person name="Kane M.F."/>
            <person name="Williamson J."/>
            <person name="Simpson A.J.G."/>
            <person name="Bulyk M.L."/>
            <person name="Harlow E."/>
            <person name="Marsischky G."/>
            <person name="Kolodner R.D."/>
            <person name="LaBaer J."/>
        </authorList>
    </citation>
    <scope>NUCLEOTIDE SEQUENCE [GENOMIC DNA]</scope>
    <source>
        <strain>ATCC 204508 / S288c</strain>
    </source>
</reference>
<reference key="5">
    <citation type="submission" date="2005-05" db="UniProtKB">
        <authorList>
            <person name="Bienvenut W.V."/>
            <person name="Peters C."/>
        </authorList>
    </citation>
    <scope>PROTEIN SEQUENCE OF 2-10; 13-73; 104-123; 128-137 AND 168-181</scope>
    <scope>CLEAVAGE OF INITIATOR METHIONINE</scope>
    <scope>ACETYLATION AT SER-2</scope>
    <scope>IDENTIFICATION BY MASS SPECTROMETRY</scope>
</reference>
<reference key="6">
    <citation type="journal article" date="1987" name="J. Biol. Chem.">
        <title>Assembly of the mitochondrial membrane system. MRP1 and MRP2, two yeast nuclear genes coding for mitochondrial ribosomal proteins.</title>
        <authorList>
            <person name="Myers A.M."/>
            <person name="Crivellone M.D."/>
            <person name="Tzagoloff A."/>
        </authorList>
    </citation>
    <scope>NUCLEOTIDE SEQUENCE [GENOMIC DNA] OF 201-209</scope>
</reference>
<reference key="7">
    <citation type="journal article" date="1994" name="J. Cell Biol.">
        <title>Growth site localization of Rho1 small GTP-binding protein and its involvement in bud formation in Saccharomyces cerevisiae.</title>
        <authorList>
            <person name="Yamochi W."/>
            <person name="Tanaka K."/>
            <person name="Nonaka H."/>
            <person name="Maeda A."/>
            <person name="Musha T."/>
            <person name="Takai Y."/>
        </authorList>
    </citation>
    <scope>FUNCTION</scope>
    <scope>SUBCELLULAR LOCATION</scope>
</reference>
<reference key="8">
    <citation type="journal article" date="1995" name="EMBO J.">
        <title>A downstream target of RHO1 small GTP-binding protein is PKC1, a homolog of protein kinase C, which leads to activation of the MAP kinase cascade in Saccharomyces cerevisiae.</title>
        <authorList>
            <person name="Nonaka H."/>
            <person name="Tanaka K."/>
            <person name="Hirano H."/>
            <person name="Fujiwara T."/>
            <person name="Kohno H."/>
            <person name="Umikawa M."/>
            <person name="Mino A."/>
            <person name="Takai Y."/>
        </authorList>
    </citation>
    <scope>FUNCTION</scope>
    <scope>INTERACTION WITH PKC1</scope>
    <scope>MUTAGENESIS OF VAL-43; PHE-44 AND GLU-45</scope>
</reference>
<reference key="9">
    <citation type="journal article" date="1995" name="Mol. Biol. Cell">
        <title>The rho-GAP encoded by BEM2 regulates cytoskeletal structure in budding yeast.</title>
        <authorList>
            <person name="Wang T."/>
            <person name="Bretscher A."/>
        </authorList>
    </citation>
    <scope>FUNCTION</scope>
    <scope>ACTIVITY REGULATION</scope>
</reference>
<reference key="10">
    <citation type="journal article" date="1996" name="EMBO J.">
        <title>Rom1p and Rom2p are GDP/GTP exchange proteins (GEPs) for the Rho1p small GTP binding protein in Saccharomyces cerevisiae.</title>
        <authorList>
            <person name="Ozaki K."/>
            <person name="Tanaka K."/>
            <person name="Imamura H."/>
            <person name="Hihara T."/>
            <person name="Kameyama T."/>
            <person name="Nonaka H."/>
            <person name="Hirano H."/>
            <person name="Matsuura Y."/>
            <person name="Takai Y."/>
        </authorList>
    </citation>
    <scope>ACTIVITY REGULATION</scope>
</reference>
<reference key="11">
    <citation type="journal article" date="1996" name="EMBO J.">
        <title>Bni1p implicated in cytoskeletal control is a putative target of Rho1p small GTP binding protein in Saccharomyces cerevisiae.</title>
        <authorList>
            <person name="Kohno H."/>
            <person name="Tanaka K."/>
            <person name="Mino A."/>
            <person name="Umikawa M."/>
            <person name="Imamura H."/>
            <person name="Fujiwara T."/>
            <person name="Fujita Y."/>
            <person name="Hotta K."/>
            <person name="Qadota H."/>
            <person name="Watanabe T."/>
            <person name="Ohya Y."/>
            <person name="Takai Y."/>
        </authorList>
    </citation>
    <scope>FUNCTION</scope>
    <scope>INTERACTION WITH BNI1</scope>
    <scope>MUTAGENESIS OF THR-24 AND THR-42</scope>
</reference>
<reference key="12">
    <citation type="journal article" date="1996" name="J. Biol. Chem.">
        <title>Activation of yeast protein kinase C by Rho1 GTPase.</title>
        <authorList>
            <person name="Kamada Y."/>
            <person name="Qadota H."/>
            <person name="Python C.P."/>
            <person name="Anraku Y."/>
            <person name="Ohya Y."/>
            <person name="Levin D.E."/>
        </authorList>
    </citation>
    <scope>FUNCTION</scope>
    <scope>INTERACTION WITH PKC1</scope>
</reference>
<reference key="13">
    <citation type="journal article" date="1996" name="Mol. Cell. Biol.">
        <title>Identification of the bud emergence gene BEM4 and its interactions with rho-type GTPases in Saccharomyces cerevisiae.</title>
        <authorList>
            <person name="Mack D."/>
            <person name="Nishimura K."/>
            <person name="Dennehey B.K."/>
            <person name="Arbogast T."/>
            <person name="Parkinson J."/>
            <person name="Toh-e A."/>
            <person name="Pringle J.R."/>
            <person name="Bender A."/>
            <person name="Matsui Y."/>
        </authorList>
    </citation>
    <scope>INTERACTION WITH BEM4</scope>
</reference>
<reference key="14">
    <citation type="journal article" date="1996" name="Mol. Cell. Biol.">
        <title>ROM7/BEM4 encodes a novel protein that interacts with the Rho1p small GTP-binding protein in Saccharomyces cerevisiae.</title>
        <authorList>
            <person name="Hirano H."/>
            <person name="Tanaka K."/>
            <person name="Ozaki K."/>
            <person name="Imamura H."/>
            <person name="Kohno H."/>
            <person name="Hihara T."/>
            <person name="Kameyama T."/>
            <person name="Hotta K."/>
            <person name="Arisawa M."/>
            <person name="Watanabe T."/>
            <person name="Qadota H."/>
            <person name="Ohya Y."/>
            <person name="Takai Y."/>
        </authorList>
    </citation>
    <scope>INTERACTION WITH BEM4</scope>
</reference>
<reference key="15">
    <citation type="journal article" date="1996" name="Science">
        <title>Rho1p, a yeast protein at the interface between cell polarization and morphogenesis.</title>
        <authorList>
            <person name="Drgonova J."/>
            <person name="Drgon T."/>
            <person name="Tanaka K."/>
            <person name="Kollar R."/>
            <person name="Chen G.-C."/>
            <person name="Ford R.A."/>
            <person name="Chan C.S.M."/>
            <person name="Takai Y."/>
            <person name="Cabib E."/>
        </authorList>
    </citation>
    <scope>FUNCTION</scope>
    <scope>SUBCELLULAR LOCATION</scope>
</reference>
<reference key="16">
    <citation type="journal article" date="1996" name="Science">
        <title>Identification of yeast Rho1p GTPase as a regulatory subunit of 1,3-beta-glucan synthase.</title>
        <authorList>
            <person name="Qadota H."/>
            <person name="Python C.P."/>
            <person name="Inoue S.B."/>
            <person name="Arisawa M."/>
            <person name="Anraku Y."/>
            <person name="Zheng Y."/>
            <person name="Watanabe T."/>
            <person name="Levin D.E."/>
            <person name="Ohya Y."/>
        </authorList>
    </citation>
    <scope>FUNCTION</scope>
    <scope>INTERACTION WITH FKS1</scope>
</reference>
<reference key="17">
    <citation type="journal article" date="1997" name="Cell">
        <title>The yeast phosphatidylinositol kinase homolog TOR2 activates RHO1 and RHO2 via the exchange factor ROM2.</title>
        <authorList>
            <person name="Schmidt A."/>
            <person name="Bickle M."/>
            <person name="Beck T."/>
            <person name="Hall M.N."/>
        </authorList>
    </citation>
    <scope>ACTIVITY REGULATION</scope>
    <scope>INTERACTION WITH SAC7</scope>
</reference>
<reference key="18">
    <citation type="journal article" date="1997" name="Oncogene">
        <title>Association of the Rho family small GTP-binding proteins with Rho GDP dissociation inhibitor (Rho GDI) in Saccharomyces cerevisiae.</title>
        <authorList>
            <person name="Koch G."/>
            <person name="Tanaka K."/>
            <person name="Masuda T."/>
            <person name="Yamochi W."/>
            <person name="Nonaka H."/>
            <person name="Takai Y."/>
        </authorList>
    </citation>
    <scope>ACTIVITY REGULATION</scope>
    <scope>INTERACTION WITH RDI1</scope>
</reference>
<reference key="19">
    <citation type="journal article" date="1998" name="J. Biol. Chem.">
        <title>Analysis of RhoA-binding proteins reveals an interaction domain conserved in heterotrimeric G protein beta subunits and the yeast response regulator protein Skn7.</title>
        <authorList>
            <person name="Alberts A.S."/>
            <person name="Bouquin N."/>
            <person name="Johnston L.H."/>
            <person name="Treisman R."/>
        </authorList>
    </citation>
    <scope>INTERACTION WITH SKN7</scope>
</reference>
<reference key="20">
    <citation type="journal article" date="2001" name="FEBS Lett.">
        <title>Functional characterization of the Bag7, Lrg1 and Rgd2 RhoGAP proteins from Saccharomyces cerevisiae.</title>
        <authorList>
            <person name="Roumanie O."/>
            <person name="Weinachter C."/>
            <person name="Larrieu I."/>
            <person name="Crouzet M."/>
            <person name="Doignon F."/>
        </authorList>
    </citation>
    <scope>ACTIVITY REGULATION</scope>
    <scope>INTERACTION WITH BAG7</scope>
</reference>
<reference key="21">
    <citation type="journal article" date="2001" name="J. Biol. Chem.">
        <title>Complementing yeast rho1 mutation groups with distinct functional defects.</title>
        <authorList>
            <person name="Saka A."/>
            <person name="Abe M."/>
            <person name="Okano H."/>
            <person name="Minemura M."/>
            <person name="Qadota H."/>
            <person name="Utsugi T."/>
            <person name="Mino A."/>
            <person name="Tanaka K."/>
            <person name="Takai Y."/>
            <person name="Ohya Y."/>
        </authorList>
    </citation>
    <scope>MUTAGENESIS OF GLU-45; LEU-60; ASP-70; GLU-102; TRP-104; GLY-121; SER-165 AND LYS-167</scope>
</reference>
<reference key="22">
    <citation type="journal article" date="2001" name="Nat. Cell Biol.">
        <title>Spatial regulation of the exocyst complex by Rho1 GTPase.</title>
        <authorList>
            <person name="Guo W."/>
            <person name="Tamanoi F."/>
            <person name="Novick P."/>
        </authorList>
    </citation>
    <scope>FUNCTION</scope>
    <scope>INTERACTION WITH SEC3</scope>
</reference>
<reference key="23">
    <citation type="journal article" date="2001" name="Yeast">
        <title>Yeast Lrg1p acts as a specialized RhoGAP regulating 1,3-beta-glucan synthesis.</title>
        <authorList>
            <person name="Watanabe D."/>
            <person name="Abe M."/>
            <person name="Ohya Y."/>
        </authorList>
    </citation>
    <scope>FUNCTION</scope>
    <scope>ACTIVITY REGULATION</scope>
    <scope>INTERACTION WITH LRG1 AND SAC7</scope>
</reference>
<reference key="24">
    <citation type="journal article" date="2002" name="Curr. Biol.">
        <title>Rho1 directs formin-mediated actin ring assembly during budding yeast cytokinesis.</title>
        <authorList>
            <person name="Tolliday N."/>
            <person name="VerPlank L."/>
            <person name="Li R."/>
        </authorList>
    </citation>
    <scope>FUNCTION</scope>
</reference>
<reference key="25">
    <citation type="journal article" date="2002" name="Mol. Cell. Biol.">
        <title>Yeast protein kinases and the RHO1 exchange factor TUS1 are novel components of the cell integrity pathway in yeast.</title>
        <authorList>
            <person name="Schmelzle T."/>
            <person name="Helliwell S.B."/>
            <person name="Hall M.N."/>
        </authorList>
    </citation>
    <scope>ACTIVITY REGULATION</scope>
    <scope>INTERACTION WITH TUS1</scope>
</reference>
<reference key="26">
    <citation type="journal article" date="2002" name="Mol. Microbiol.">
        <title>The RHO1-GAPs SAC7, BEM2 and BAG7 control distinct RHO1 functions in Saccharomyces cerevisiae.</title>
        <authorList>
            <person name="Schmidt A."/>
            <person name="Schmelzle T."/>
            <person name="Hall M.N."/>
        </authorList>
    </citation>
    <scope>FUNCTION</scope>
    <scope>INTERACTION WITH BAG7</scope>
</reference>
<reference key="27">
    <citation type="journal article" date="2003" name="J. Cell Biol.">
        <title>Formin-dependent actin assembly is regulated by distinct modes of Rho signaling in yeast.</title>
        <authorList>
            <person name="Dong Y."/>
            <person name="Pruyne D."/>
            <person name="Bretscher A."/>
        </authorList>
    </citation>
    <scope>FUNCTION</scope>
</reference>
<reference key="28">
    <citation type="journal article" date="2003" name="J. Biol. Chem.">
        <title>Gbetagamma recruits Rho1 to the site of polarized growth during mating in budding yeast.</title>
        <authorList>
            <person name="Bar E.E."/>
            <person name="Ellicott A.T."/>
            <person name="Stone D.E."/>
        </authorList>
    </citation>
    <scope>INTERACTION WITH STE4</scope>
    <scope>SUBCELLULAR LOCATION</scope>
</reference>
<reference key="29">
    <citation type="journal article" date="2003" name="Proc. Natl. Acad. Sci. U.S.A.">
        <title>The yeasts Rho1p and Pkc1p regulate the transport of chitin synthase III (Chs3p) from internal stores to the plasma membrane.</title>
        <authorList>
            <person name="Valdivia R.H."/>
            <person name="Schekman R."/>
        </authorList>
    </citation>
    <scope>FUNCTION</scope>
</reference>
<reference key="30">
    <citation type="journal article" date="2004" name="Genetics">
        <title>Lrg1p Is a Rho1 GTPase-activating protein required for efficient cell fusion in yeast.</title>
        <authorList>
            <person name="Fitch P.G."/>
            <person name="Gammie A.E."/>
            <person name="Lee D.J."/>
            <person name="Brizzio de Candal V."/>
            <person name="Rose M.D."/>
        </authorList>
    </citation>
    <scope>FUNCTION</scope>
    <scope>ACTIVITY REGULATION</scope>
</reference>
<reference key="31">
    <citation type="journal article" date="2004" name="J. Cell Biol.">
        <title>Quantitative mass spectrometry reveals a role for the GTPase Rho1p in actin organization on the peroxisome membrane.</title>
        <authorList>
            <person name="Marelli M."/>
            <person name="Smith J.J."/>
            <person name="Jung S."/>
            <person name="Yi E."/>
            <person name="Nesvizhskii A.I."/>
            <person name="Christmas R.H."/>
            <person name="Saleem R.A."/>
            <person name="Tam Y.Y.C."/>
            <person name="Fagarasanu A."/>
            <person name="Goodlett D.R."/>
            <person name="Aebersold R."/>
            <person name="Rachubinski R.A."/>
            <person name="Aitchison J.D."/>
        </authorList>
    </citation>
    <scope>FUNCTION</scope>
    <scope>SUBCELLULAR LOCATION</scope>
</reference>
<reference key="32">
    <citation type="journal article" date="2012" name="Proc. Natl. Acad. Sci. U.S.A.">
        <title>N-terminal acetylome analyses and functional insights of the N-terminal acetyltransferase NatB.</title>
        <authorList>
            <person name="Van Damme P."/>
            <person name="Lasa M."/>
            <person name="Polevoda B."/>
            <person name="Gazquez C."/>
            <person name="Elosegui-Artola A."/>
            <person name="Kim D.S."/>
            <person name="De Juan-Pardo E."/>
            <person name="Demeyer K."/>
            <person name="Hole K."/>
            <person name="Larrea E."/>
            <person name="Timmerman E."/>
            <person name="Prieto J."/>
            <person name="Arnesen T."/>
            <person name="Sherman F."/>
            <person name="Gevaert K."/>
            <person name="Aldabe R."/>
        </authorList>
    </citation>
    <scope>ACETYLATION [LARGE SCALE ANALYSIS] AT SER-2</scope>
    <scope>CLEAVAGE OF INITIATOR METHIONINE [LARGE SCALE ANALYSIS]</scope>
    <scope>IDENTIFICATION BY MASS SPECTROMETRY [LARGE SCALE ANALYSIS]</scope>
</reference>
<proteinExistence type="evidence at protein level"/>
<sequence length="209" mass="23152">MSQQVGNSIRRKLVIVGDGACGKTCLLIVFSKGQFPEVYVPTVFENYVADVEVDGRRVELALWDTAGQEDYDRLRPLSYPDSNVVLICFSIDLPDSLENVQEKWIAEVLHFCQGVPIILVGCKVDLRNDPQTIEQLRQEGQQPVTSQEGQSVADQIGATGYYECSAKTGYGVREVFEAATRASLMGKSKTNGKAKKNTTEKKKKKCVLL</sequence>
<name>RHO1_YEAST</name>
<feature type="initiator methionine" description="Removed" evidence="31 33">
    <location>
        <position position="1"/>
    </location>
</feature>
<feature type="chain" id="PRO_0000198945" description="GTP-binding protein RHO1">
    <location>
        <begin position="2"/>
        <end position="206"/>
    </location>
</feature>
<feature type="propeptide" id="PRO_0000281275" description="Removed in mature form">
    <location>
        <begin position="207"/>
        <end position="209"/>
    </location>
</feature>
<feature type="region of interest" description="Disordered" evidence="4">
    <location>
        <begin position="187"/>
        <end position="209"/>
    </location>
</feature>
<feature type="short sequence motif" description="Effector region" evidence="1">
    <location>
        <begin position="39"/>
        <end position="47"/>
    </location>
</feature>
<feature type="compositionally biased region" description="Basic residues" evidence="4">
    <location>
        <begin position="190"/>
        <end position="209"/>
    </location>
</feature>
<feature type="binding site" evidence="2">
    <location>
        <begin position="17"/>
        <end position="24"/>
    </location>
    <ligand>
        <name>GTP</name>
        <dbReference type="ChEBI" id="CHEBI:37565"/>
    </ligand>
</feature>
<feature type="binding site" evidence="1">
    <location>
        <begin position="64"/>
        <end position="68"/>
    </location>
    <ligand>
        <name>GTP</name>
        <dbReference type="ChEBI" id="CHEBI:37565"/>
    </ligand>
</feature>
<feature type="binding site" evidence="2">
    <location>
        <begin position="122"/>
        <end position="125"/>
    </location>
    <ligand>
        <name>GTP</name>
        <dbReference type="ChEBI" id="CHEBI:37565"/>
    </ligand>
</feature>
<feature type="modified residue" description="N-acetylserine" evidence="31 33">
    <location>
        <position position="2"/>
    </location>
</feature>
<feature type="modified residue" description="Cysteine methyl ester" evidence="3">
    <location>
        <position position="206"/>
    </location>
</feature>
<feature type="lipid moiety-binding region" description="S-geranylgeranyl cysteine" evidence="3">
    <location>
        <position position="206"/>
    </location>
</feature>
<feature type="mutagenesis site" description="Abolishes GTP-binding.">
    <original>G</original>
    <variation>A</variation>
    <location>
        <position position="22"/>
    </location>
</feature>
<feature type="mutagenesis site" description="Abolishes GTP-binding." evidence="27">
    <original>T</original>
    <variation>N</variation>
    <location>
        <position position="24"/>
    </location>
</feature>
<feature type="mutagenesis site" description="Impairs interaction with targets." evidence="27">
    <original>T</original>
    <variation>A</variation>
    <location>
        <position position="42"/>
    </location>
</feature>
<feature type="mutagenesis site" description="Temperature sensitive growth defect." evidence="26">
    <original>V</original>
    <variation>T</variation>
    <location>
        <position position="43"/>
    </location>
</feature>
<feature type="mutagenesis site" description="Temperature sensitive growth defect." evidence="26">
    <original>F</original>
    <variation>Y</variation>
    <location>
        <position position="44"/>
    </location>
</feature>
<feature type="mutagenesis site" description="Temperature sensitive growth defect." evidence="7 26">
    <original>E</original>
    <variation>I</variation>
    <location>
        <position position="45"/>
    </location>
</feature>
<feature type="mutagenesis site" description="In RHO1-2; temperature sensitive, fails to activate PKC1." evidence="7 26">
    <original>E</original>
    <variation>V</variation>
    <location>
        <position position="45"/>
    </location>
</feature>
<feature type="mutagenesis site" description="In RHO1-3; temperature sensitive, severely decreases beta-1,3-glucan synthase activation." evidence="7">
    <original>L</original>
    <variation>P</variation>
    <location>
        <position position="60"/>
    </location>
</feature>
<feature type="mutagenesis site" description="Locks RHO1 in the GTP-bound form by abolishing GTP hydrolysis." evidence="17">
    <original>Q</original>
    <variation>H</variation>
    <location>
        <position position="68"/>
    </location>
</feature>
<feature type="mutagenesis site" description="In RHO1-10; temperature sensitive, severely decreases beta-1,3-glucan synthase activation; when associated with P-165." evidence="7">
    <original>D</original>
    <variation>G</variation>
    <location>
        <position position="70"/>
    </location>
</feature>
<feature type="mutagenesis site" description="In RHO1-11; temperature sensitive, severely decreases beta-1,3-glucan synthase activation; when associated with E-166." evidence="7">
    <original>E</original>
    <variation>K</variation>
    <location>
        <position position="102"/>
    </location>
</feature>
<feature type="mutagenesis site" description="In RHO1-4; temperature sensitive, severely decreases beta-1,3-glucan synthase activation." evidence="7">
    <original>W</original>
    <variation>R</variation>
    <location>
        <position position="104"/>
    </location>
</feature>
<feature type="mutagenesis site" description="In RHO1-5; temperature sensitive, fails to activate PCK1." evidence="7">
    <original>G</original>
    <variation>C</variation>
    <location>
        <position position="121"/>
    </location>
</feature>
<feature type="mutagenesis site" description="In RHO1-10; temperature sensitive, severely decreases beta-1,3-glucan synthase activation; when associated with G-69." evidence="7">
    <original>S</original>
    <variation>P</variation>
    <location>
        <position position="165"/>
    </location>
</feature>
<feature type="mutagenesis site" description="In RHO1-11; temperature sensitive, severely decreases beta-1,3-glucan synthase activation; when associated with K-101." evidence="7">
    <original>K</original>
    <variation>E</variation>
    <location>
        <position position="167"/>
    </location>
</feature>
<feature type="strand" evidence="34">
    <location>
        <begin position="9"/>
        <end position="18"/>
    </location>
</feature>
<feature type="helix" evidence="34">
    <location>
        <begin position="23"/>
        <end position="31"/>
    </location>
</feature>
<feature type="strand" evidence="34">
    <location>
        <begin position="45"/>
        <end position="53"/>
    </location>
</feature>
<feature type="strand" evidence="34">
    <location>
        <begin position="56"/>
        <end position="64"/>
    </location>
</feature>
<feature type="helix" evidence="34">
    <location>
        <begin position="69"/>
        <end position="77"/>
    </location>
</feature>
<feature type="strand" evidence="34">
    <location>
        <begin position="83"/>
        <end position="90"/>
    </location>
</feature>
<feature type="helix" evidence="34">
    <location>
        <begin position="94"/>
        <end position="102"/>
    </location>
</feature>
<feature type="helix" evidence="34">
    <location>
        <begin position="104"/>
        <end position="111"/>
    </location>
</feature>
<feature type="strand" evidence="34">
    <location>
        <begin position="117"/>
        <end position="122"/>
    </location>
</feature>
<feature type="helix" evidence="34">
    <location>
        <begin position="124"/>
        <end position="126"/>
    </location>
</feature>
<feature type="helix" evidence="34">
    <location>
        <begin position="130"/>
        <end position="138"/>
    </location>
</feature>
<feature type="helix" evidence="34">
    <location>
        <begin position="146"/>
        <end position="155"/>
    </location>
</feature>
<feature type="strand" evidence="34">
    <location>
        <begin position="161"/>
        <end position="163"/>
    </location>
</feature>
<feature type="turn" evidence="34">
    <location>
        <begin position="166"/>
        <end position="168"/>
    </location>
</feature>
<feature type="helix" evidence="34">
    <location>
        <begin position="172"/>
        <end position="184"/>
    </location>
</feature>